<organism>
    <name type="scientific">Solanum tuberosum</name>
    <name type="common">Potato</name>
    <dbReference type="NCBI Taxonomy" id="4113"/>
    <lineage>
        <taxon>Eukaryota</taxon>
        <taxon>Viridiplantae</taxon>
        <taxon>Streptophyta</taxon>
        <taxon>Embryophyta</taxon>
        <taxon>Tracheophyta</taxon>
        <taxon>Spermatophyta</taxon>
        <taxon>Magnoliopsida</taxon>
        <taxon>eudicotyledons</taxon>
        <taxon>Gunneridae</taxon>
        <taxon>Pentapetalae</taxon>
        <taxon>asterids</taxon>
        <taxon>lamiids</taxon>
        <taxon>Solanales</taxon>
        <taxon>Solanaceae</taxon>
        <taxon>Solanoideae</taxon>
        <taxon>Solaneae</taxon>
        <taxon>Solanum</taxon>
    </lineage>
</organism>
<feature type="chain" id="PRO_0000240200" description="NAD(P)H-quinone oxidoreductase subunit 1, chloroplastic">
    <location>
        <begin position="1"/>
        <end position="363"/>
    </location>
</feature>
<feature type="transmembrane region" description="Helical" evidence="1">
    <location>
        <begin position="30"/>
        <end position="50"/>
    </location>
</feature>
<feature type="transmembrane region" description="Helical" evidence="1">
    <location>
        <begin position="98"/>
        <end position="118"/>
    </location>
</feature>
<feature type="transmembrane region" description="Helical" evidence="1">
    <location>
        <begin position="127"/>
        <end position="147"/>
    </location>
</feature>
<feature type="transmembrane region" description="Helical" evidence="1">
    <location>
        <begin position="165"/>
        <end position="185"/>
    </location>
</feature>
<feature type="transmembrane region" description="Helical" evidence="1">
    <location>
        <begin position="203"/>
        <end position="223"/>
    </location>
</feature>
<feature type="transmembrane region" description="Helical" evidence="1">
    <location>
        <begin position="248"/>
        <end position="268"/>
    </location>
</feature>
<feature type="transmembrane region" description="Helical" evidence="1">
    <location>
        <begin position="300"/>
        <end position="320"/>
    </location>
</feature>
<feature type="transmembrane region" description="Helical" evidence="1">
    <location>
        <begin position="336"/>
        <end position="356"/>
    </location>
</feature>
<name>NU1C_SOLTU</name>
<comment type="function">
    <text evidence="1">NDH shuttles electrons from NAD(P)H:plastoquinone, via FMN and iron-sulfur (Fe-S) centers, to quinones in the photosynthetic chain and possibly in a chloroplast respiratory chain. The immediate electron acceptor for the enzyme in this species is believed to be plastoquinone. Couples the redox reaction to proton translocation, and thus conserves the redox energy in a proton gradient.</text>
</comment>
<comment type="catalytic activity">
    <reaction evidence="1">
        <text>a plastoquinone + NADH + (n+1) H(+)(in) = a plastoquinol + NAD(+) + n H(+)(out)</text>
        <dbReference type="Rhea" id="RHEA:42608"/>
        <dbReference type="Rhea" id="RHEA-COMP:9561"/>
        <dbReference type="Rhea" id="RHEA-COMP:9562"/>
        <dbReference type="ChEBI" id="CHEBI:15378"/>
        <dbReference type="ChEBI" id="CHEBI:17757"/>
        <dbReference type="ChEBI" id="CHEBI:57540"/>
        <dbReference type="ChEBI" id="CHEBI:57945"/>
        <dbReference type="ChEBI" id="CHEBI:62192"/>
    </reaction>
</comment>
<comment type="catalytic activity">
    <reaction evidence="1">
        <text>a plastoquinone + NADPH + (n+1) H(+)(in) = a plastoquinol + NADP(+) + n H(+)(out)</text>
        <dbReference type="Rhea" id="RHEA:42612"/>
        <dbReference type="Rhea" id="RHEA-COMP:9561"/>
        <dbReference type="Rhea" id="RHEA-COMP:9562"/>
        <dbReference type="ChEBI" id="CHEBI:15378"/>
        <dbReference type="ChEBI" id="CHEBI:17757"/>
        <dbReference type="ChEBI" id="CHEBI:57783"/>
        <dbReference type="ChEBI" id="CHEBI:58349"/>
        <dbReference type="ChEBI" id="CHEBI:62192"/>
    </reaction>
</comment>
<comment type="subunit">
    <text evidence="1">NDH is composed of at least 16 different subunits, 5 of which are encoded in the nucleus.</text>
</comment>
<comment type="subcellular location">
    <subcellularLocation>
        <location evidence="1">Plastid</location>
        <location evidence="1">Chloroplast thylakoid membrane</location>
        <topology evidence="1">Multi-pass membrane protein</topology>
    </subcellularLocation>
</comment>
<comment type="similarity">
    <text evidence="1">Belongs to the complex I subunit 1 family.</text>
</comment>
<protein>
    <recommendedName>
        <fullName evidence="1">NAD(P)H-quinone oxidoreductase subunit 1, chloroplastic</fullName>
        <ecNumber evidence="1">7.1.1.-</ecNumber>
    </recommendedName>
    <alternativeName>
        <fullName evidence="1">NAD(P)H dehydrogenase subunit 1</fullName>
        <shortName evidence="1">NDH subunit 1</shortName>
    </alternativeName>
    <alternativeName>
        <fullName evidence="1">NADH-plastoquinone oxidoreductase subunit 1</fullName>
    </alternativeName>
</protein>
<geneLocation type="chloroplast"/>
<sequence>MIIDTTEIETINSFSKLESLKEVYGIIWMLVPIVTLVLGITIGVLVIVWLEREISAGIQQRIGPEYAGPLGILQALADGTKLLLKENLIPSTGDTRLFSIGPSIAVISIFLSYSVIPFGDHLVLADLSIGVFFWIAISSIAPVGLLMSGYGSNNKYSFLGGLRAAAQSISYEIPLALCVLSISLLSNSSSTVDIVEAQSKYGFWGWNLWRQPIGFIVFLISSLAECERLPFDLPEAEEELVAGYQTEYSGIKFGLFYIASYLNLLVSSLFVTVLYLGGWNLSIPYIFVPELFGINKGGKVFGTLIGIFITLAKTYLFLFIPIATRWTLPRLRMDQLLNLGWKFLLPISLGNLLLTTSSQLLSL</sequence>
<accession>Q2VEC6</accession>
<reference key="1">
    <citation type="journal article" date="2006" name="Plant Cell Rep.">
        <title>The complete chloroplast genome sequences of Solanum tuberosum and comparative analysis with Solanaceae species identified the presence of a 241-bp deletion in cultivated potato chloroplast DNA sequence.</title>
        <authorList>
            <person name="Chung H.-J."/>
            <person name="Jung J.D."/>
            <person name="Park H.-W."/>
            <person name="Kim J.-H."/>
            <person name="Cha H.W."/>
            <person name="Min S.R."/>
            <person name="Jeong W.-J."/>
            <person name="Liu J.R."/>
        </authorList>
    </citation>
    <scope>NUCLEOTIDE SEQUENCE [LARGE SCALE GENOMIC DNA]</scope>
    <source>
        <strain>cv. Desiree</strain>
    </source>
</reference>
<reference key="2">
    <citation type="submission" date="2006-02" db="EMBL/GenBank/DDBJ databases">
        <title>Complete chloroplast genome sequences of Solanum tuberosum cultivar Desiree and comparative analyses with other Solanaceae genomes.</title>
        <authorList>
            <person name="Gargano D."/>
            <person name="Scotti N."/>
            <person name="Vezzi A."/>
            <person name="Bilardi A."/>
            <person name="Valle G."/>
            <person name="Grillo S."/>
            <person name="Cardi T."/>
        </authorList>
    </citation>
    <scope>NUCLEOTIDE SEQUENCE [LARGE SCALE GENOMIC DNA]</scope>
    <source>
        <strain>cv. Desiree</strain>
    </source>
</reference>
<evidence type="ECO:0000255" key="1">
    <source>
        <dbReference type="HAMAP-Rule" id="MF_01350"/>
    </source>
</evidence>
<dbReference type="EC" id="7.1.1.-" evidence="1"/>
<dbReference type="EMBL" id="DQ231562">
    <property type="protein sequence ID" value="ABB90092.1"/>
    <property type="molecule type" value="Genomic_DNA"/>
</dbReference>
<dbReference type="EMBL" id="DQ386163">
    <property type="protein sequence ID" value="ABD47112.1"/>
    <property type="molecule type" value="Genomic_DNA"/>
</dbReference>
<dbReference type="RefSeq" id="YP_635694.1">
    <property type="nucleotide sequence ID" value="NC_008096.2"/>
</dbReference>
<dbReference type="SMR" id="Q2VEC6"/>
<dbReference type="FunCoup" id="Q2VEC6">
    <property type="interactions" value="29"/>
</dbReference>
<dbReference type="STRING" id="4113.Q2VEC6"/>
<dbReference type="PaxDb" id="4113-PGSC0003DMT400022653"/>
<dbReference type="GeneID" id="4099910"/>
<dbReference type="KEGG" id="sot:4099910"/>
<dbReference type="eggNOG" id="KOG4770">
    <property type="taxonomic scope" value="Eukaryota"/>
</dbReference>
<dbReference type="InParanoid" id="Q2VEC6"/>
<dbReference type="OrthoDB" id="1277114at2759"/>
<dbReference type="Proteomes" id="UP000011115">
    <property type="component" value="Unassembled WGS sequence"/>
</dbReference>
<dbReference type="ExpressionAtlas" id="Q2VEC6">
    <property type="expression patterns" value="baseline"/>
</dbReference>
<dbReference type="GO" id="GO:0009535">
    <property type="term" value="C:chloroplast thylakoid membrane"/>
    <property type="evidence" value="ECO:0007669"/>
    <property type="project" value="UniProtKB-SubCell"/>
</dbReference>
<dbReference type="GO" id="GO:0016655">
    <property type="term" value="F:oxidoreductase activity, acting on NAD(P)H, quinone or similar compound as acceptor"/>
    <property type="evidence" value="ECO:0007669"/>
    <property type="project" value="UniProtKB-UniRule"/>
</dbReference>
<dbReference type="GO" id="GO:0048038">
    <property type="term" value="F:quinone binding"/>
    <property type="evidence" value="ECO:0007669"/>
    <property type="project" value="UniProtKB-KW"/>
</dbReference>
<dbReference type="GO" id="GO:0009060">
    <property type="term" value="P:aerobic respiration"/>
    <property type="evidence" value="ECO:0000318"/>
    <property type="project" value="GO_Central"/>
</dbReference>
<dbReference type="GO" id="GO:0019684">
    <property type="term" value="P:photosynthesis, light reaction"/>
    <property type="evidence" value="ECO:0007669"/>
    <property type="project" value="UniProtKB-UniRule"/>
</dbReference>
<dbReference type="HAMAP" id="MF_01350">
    <property type="entry name" value="NDH1_NuoH"/>
    <property type="match status" value="1"/>
</dbReference>
<dbReference type="InterPro" id="IPR001694">
    <property type="entry name" value="NADH_UbQ_OxRdtase_su1/FPO"/>
</dbReference>
<dbReference type="InterPro" id="IPR018086">
    <property type="entry name" value="NADH_UbQ_OxRdtase_su1_CS"/>
</dbReference>
<dbReference type="NCBIfam" id="NF004741">
    <property type="entry name" value="PRK06076.1-2"/>
    <property type="match status" value="1"/>
</dbReference>
<dbReference type="PANTHER" id="PTHR11432">
    <property type="entry name" value="NADH DEHYDROGENASE SUBUNIT 1"/>
    <property type="match status" value="1"/>
</dbReference>
<dbReference type="PANTHER" id="PTHR11432:SF3">
    <property type="entry name" value="NADH-UBIQUINONE OXIDOREDUCTASE CHAIN 1"/>
    <property type="match status" value="1"/>
</dbReference>
<dbReference type="Pfam" id="PF00146">
    <property type="entry name" value="NADHdh"/>
    <property type="match status" value="1"/>
</dbReference>
<dbReference type="PROSITE" id="PS00667">
    <property type="entry name" value="COMPLEX1_ND1_1"/>
    <property type="match status" value="1"/>
</dbReference>
<dbReference type="PROSITE" id="PS00668">
    <property type="entry name" value="COMPLEX1_ND1_2"/>
    <property type="match status" value="1"/>
</dbReference>
<gene>
    <name evidence="1" type="primary">ndhA</name>
</gene>
<proteinExistence type="inferred from homology"/>
<keyword id="KW-0150">Chloroplast</keyword>
<keyword id="KW-0472">Membrane</keyword>
<keyword id="KW-0520">NAD</keyword>
<keyword id="KW-0521">NADP</keyword>
<keyword id="KW-0934">Plastid</keyword>
<keyword id="KW-0618">Plastoquinone</keyword>
<keyword id="KW-0874">Quinone</keyword>
<keyword id="KW-1185">Reference proteome</keyword>
<keyword id="KW-0793">Thylakoid</keyword>
<keyword id="KW-1278">Translocase</keyword>
<keyword id="KW-0812">Transmembrane</keyword>
<keyword id="KW-1133">Transmembrane helix</keyword>